<reference key="1">
    <citation type="journal article" date="2006" name="Proc. Natl. Acad. Sci. U.S.A.">
        <title>Comparative genomics of the lactic acid bacteria.</title>
        <authorList>
            <person name="Makarova K.S."/>
            <person name="Slesarev A."/>
            <person name="Wolf Y.I."/>
            <person name="Sorokin A."/>
            <person name="Mirkin B."/>
            <person name="Koonin E.V."/>
            <person name="Pavlov A."/>
            <person name="Pavlova N."/>
            <person name="Karamychev V."/>
            <person name="Polouchine N."/>
            <person name="Shakhova V."/>
            <person name="Grigoriev I."/>
            <person name="Lou Y."/>
            <person name="Rohksar D."/>
            <person name="Lucas S."/>
            <person name="Huang K."/>
            <person name="Goodstein D.M."/>
            <person name="Hawkins T."/>
            <person name="Plengvidhya V."/>
            <person name="Welker D."/>
            <person name="Hughes J."/>
            <person name="Goh Y."/>
            <person name="Benson A."/>
            <person name="Baldwin K."/>
            <person name="Lee J.-H."/>
            <person name="Diaz-Muniz I."/>
            <person name="Dosti B."/>
            <person name="Smeianov V."/>
            <person name="Wechter W."/>
            <person name="Barabote R."/>
            <person name="Lorca G."/>
            <person name="Altermann E."/>
            <person name="Barrangou R."/>
            <person name="Ganesan B."/>
            <person name="Xie Y."/>
            <person name="Rawsthorne H."/>
            <person name="Tamir D."/>
            <person name="Parker C."/>
            <person name="Breidt F."/>
            <person name="Broadbent J.R."/>
            <person name="Hutkins R."/>
            <person name="O'Sullivan D."/>
            <person name="Steele J."/>
            <person name="Unlu G."/>
            <person name="Saier M.H. Jr."/>
            <person name="Klaenhammer T."/>
            <person name="Richardson P."/>
            <person name="Kozyavkin S."/>
            <person name="Weimer B.C."/>
            <person name="Mills D.A."/>
        </authorList>
    </citation>
    <scope>NUCLEOTIDE SEQUENCE [LARGE SCALE GENOMIC DNA]</scope>
    <source>
        <strain>ATCC 25745 / CCUG 21536 / LMG 10740 / 183-1w</strain>
    </source>
</reference>
<name>Y871_PEDPA</name>
<evidence type="ECO:0000255" key="1">
    <source>
        <dbReference type="HAMAP-Rule" id="MF_01103"/>
    </source>
</evidence>
<keyword id="KW-0963">Cytoplasm</keyword>
<gene>
    <name type="ordered locus">PEPE_0871</name>
</gene>
<organism>
    <name type="scientific">Pediococcus pentosaceus (strain ATCC 25745 / CCUG 21536 / LMG 10740 / 183-1w)</name>
    <dbReference type="NCBI Taxonomy" id="278197"/>
    <lineage>
        <taxon>Bacteria</taxon>
        <taxon>Bacillati</taxon>
        <taxon>Bacillota</taxon>
        <taxon>Bacilli</taxon>
        <taxon>Lactobacillales</taxon>
        <taxon>Lactobacillaceae</taxon>
        <taxon>Pediococcus</taxon>
    </lineage>
</organism>
<feature type="chain" id="PRO_1000084799" description="UPF0291 protein PEPE_0871">
    <location>
        <begin position="1"/>
        <end position="82"/>
    </location>
</feature>
<dbReference type="EMBL" id="CP000422">
    <property type="protein sequence ID" value="ABJ67930.1"/>
    <property type="molecule type" value="Genomic_DNA"/>
</dbReference>
<dbReference type="RefSeq" id="WP_002833598.1">
    <property type="nucleotide sequence ID" value="NC_008525.1"/>
</dbReference>
<dbReference type="SMR" id="Q03FU2"/>
<dbReference type="STRING" id="278197.PEPE_0871"/>
<dbReference type="GeneID" id="33061882"/>
<dbReference type="KEGG" id="ppe:PEPE_0871"/>
<dbReference type="eggNOG" id="COG4224">
    <property type="taxonomic scope" value="Bacteria"/>
</dbReference>
<dbReference type="HOGENOM" id="CLU_173137_0_1_9"/>
<dbReference type="OrthoDB" id="390105at2"/>
<dbReference type="Proteomes" id="UP000000773">
    <property type="component" value="Chromosome"/>
</dbReference>
<dbReference type="GO" id="GO:0005737">
    <property type="term" value="C:cytoplasm"/>
    <property type="evidence" value="ECO:0007669"/>
    <property type="project" value="UniProtKB-SubCell"/>
</dbReference>
<dbReference type="Gene3D" id="1.10.287.540">
    <property type="entry name" value="Helix hairpin bin"/>
    <property type="match status" value="1"/>
</dbReference>
<dbReference type="HAMAP" id="MF_01103">
    <property type="entry name" value="UPF0291"/>
    <property type="match status" value="1"/>
</dbReference>
<dbReference type="InterPro" id="IPR009242">
    <property type="entry name" value="DUF896"/>
</dbReference>
<dbReference type="PANTHER" id="PTHR37300">
    <property type="entry name" value="UPF0291 PROTEIN CBO2609/CLC_2481"/>
    <property type="match status" value="1"/>
</dbReference>
<dbReference type="PANTHER" id="PTHR37300:SF1">
    <property type="entry name" value="UPF0291 PROTEIN YNZC"/>
    <property type="match status" value="1"/>
</dbReference>
<dbReference type="Pfam" id="PF05979">
    <property type="entry name" value="DUF896"/>
    <property type="match status" value="1"/>
</dbReference>
<dbReference type="SUPFAM" id="SSF158221">
    <property type="entry name" value="YnzC-like"/>
    <property type="match status" value="1"/>
</dbReference>
<comment type="subcellular location">
    <subcellularLocation>
        <location evidence="1">Cytoplasm</location>
    </subcellularLocation>
</comment>
<comment type="similarity">
    <text evidence="1">Belongs to the UPF0291 family.</text>
</comment>
<proteinExistence type="inferred from homology"/>
<sequence>MADQEMQKLIKRINELAKKAKEEGLSDLEIIERKDLRQKYLKKFRESFRSQVEMMQIFDKEGKEVTPEKVKEVQRKKGLRDD</sequence>
<protein>
    <recommendedName>
        <fullName evidence="1">UPF0291 protein PEPE_0871</fullName>
    </recommendedName>
</protein>
<accession>Q03FU2</accession>